<proteinExistence type="inferred from homology"/>
<evidence type="ECO:0000250" key="1">
    <source>
        <dbReference type="UniProtKB" id="P08839"/>
    </source>
</evidence>
<evidence type="ECO:0000250" key="2">
    <source>
        <dbReference type="UniProtKB" id="P23533"/>
    </source>
</evidence>
<evidence type="ECO:0000305" key="3"/>
<gene>
    <name type="primary">ptsI</name>
    <name type="ordered locus">SACOL1092</name>
</gene>
<accession>Q5HH01</accession>
<keyword id="KW-0963">Cytoplasm</keyword>
<keyword id="KW-0418">Kinase</keyword>
<keyword id="KW-0460">Magnesium</keyword>
<keyword id="KW-0479">Metal-binding</keyword>
<keyword id="KW-0598">Phosphotransferase system</keyword>
<keyword id="KW-0762">Sugar transport</keyword>
<keyword id="KW-0808">Transferase</keyword>
<keyword id="KW-0813">Transport</keyword>
<dbReference type="EC" id="2.7.3.9" evidence="1"/>
<dbReference type="EMBL" id="CP000046">
    <property type="protein sequence ID" value="AAW37972.1"/>
    <property type="molecule type" value="Genomic_DNA"/>
</dbReference>
<dbReference type="SMR" id="Q5HH01"/>
<dbReference type="KEGG" id="sac:SACOL1092"/>
<dbReference type="HOGENOM" id="CLU_007308_7_0_9"/>
<dbReference type="Proteomes" id="UP000000530">
    <property type="component" value="Chromosome"/>
</dbReference>
<dbReference type="GO" id="GO:0005737">
    <property type="term" value="C:cytoplasm"/>
    <property type="evidence" value="ECO:0007669"/>
    <property type="project" value="UniProtKB-SubCell"/>
</dbReference>
<dbReference type="GO" id="GO:0016301">
    <property type="term" value="F:kinase activity"/>
    <property type="evidence" value="ECO:0007669"/>
    <property type="project" value="UniProtKB-KW"/>
</dbReference>
<dbReference type="GO" id="GO:0046872">
    <property type="term" value="F:metal ion binding"/>
    <property type="evidence" value="ECO:0007669"/>
    <property type="project" value="UniProtKB-KW"/>
</dbReference>
<dbReference type="GO" id="GO:0008965">
    <property type="term" value="F:phosphoenolpyruvate-protein phosphotransferase activity"/>
    <property type="evidence" value="ECO:0007669"/>
    <property type="project" value="UniProtKB-EC"/>
</dbReference>
<dbReference type="GO" id="GO:0009401">
    <property type="term" value="P:phosphoenolpyruvate-dependent sugar phosphotransferase system"/>
    <property type="evidence" value="ECO:0007669"/>
    <property type="project" value="UniProtKB-KW"/>
</dbReference>
<dbReference type="FunFam" id="1.10.274.10:FF:000001">
    <property type="entry name" value="Phosphoenolpyruvate-protein phosphotransferase"/>
    <property type="match status" value="1"/>
</dbReference>
<dbReference type="FunFam" id="3.20.20.60:FF:000007">
    <property type="entry name" value="Phosphoenolpyruvate-protein phosphotransferase"/>
    <property type="match status" value="1"/>
</dbReference>
<dbReference type="Gene3D" id="3.20.20.60">
    <property type="entry name" value="Phosphoenolpyruvate-binding domains"/>
    <property type="match status" value="1"/>
</dbReference>
<dbReference type="Gene3D" id="3.50.30.10">
    <property type="entry name" value="Phosphohistidine domain"/>
    <property type="match status" value="1"/>
</dbReference>
<dbReference type="Gene3D" id="1.10.274.10">
    <property type="entry name" value="PtsI, HPr-binding domain"/>
    <property type="match status" value="1"/>
</dbReference>
<dbReference type="InterPro" id="IPR008279">
    <property type="entry name" value="PEP-util_enz_mobile_dom"/>
</dbReference>
<dbReference type="InterPro" id="IPR050499">
    <property type="entry name" value="PEP-utilizing_PTS_enzyme"/>
</dbReference>
<dbReference type="InterPro" id="IPR018274">
    <property type="entry name" value="PEP_util_AS"/>
</dbReference>
<dbReference type="InterPro" id="IPR000121">
    <property type="entry name" value="PEP_util_C"/>
</dbReference>
<dbReference type="InterPro" id="IPR023151">
    <property type="entry name" value="PEP_util_CS"/>
</dbReference>
<dbReference type="InterPro" id="IPR036637">
    <property type="entry name" value="Phosphohistidine_dom_sf"/>
</dbReference>
<dbReference type="InterPro" id="IPR024692">
    <property type="entry name" value="PTS_EI"/>
</dbReference>
<dbReference type="InterPro" id="IPR006318">
    <property type="entry name" value="PTS_EI-like"/>
</dbReference>
<dbReference type="InterPro" id="IPR008731">
    <property type="entry name" value="PTS_EIN"/>
</dbReference>
<dbReference type="InterPro" id="IPR036618">
    <property type="entry name" value="PtsI_HPr-bd_sf"/>
</dbReference>
<dbReference type="InterPro" id="IPR015813">
    <property type="entry name" value="Pyrv/PenolPyrv_kinase-like_dom"/>
</dbReference>
<dbReference type="InterPro" id="IPR040442">
    <property type="entry name" value="Pyrv_kinase-like_dom_sf"/>
</dbReference>
<dbReference type="NCBIfam" id="TIGR01417">
    <property type="entry name" value="PTS_I_fam"/>
    <property type="match status" value="1"/>
</dbReference>
<dbReference type="PANTHER" id="PTHR46244">
    <property type="entry name" value="PHOSPHOENOLPYRUVATE-PROTEIN PHOSPHOTRANSFERASE"/>
    <property type="match status" value="1"/>
</dbReference>
<dbReference type="PANTHER" id="PTHR46244:SF3">
    <property type="entry name" value="PHOSPHOENOLPYRUVATE-PROTEIN PHOSPHOTRANSFERASE"/>
    <property type="match status" value="1"/>
</dbReference>
<dbReference type="Pfam" id="PF05524">
    <property type="entry name" value="PEP-utilisers_N"/>
    <property type="match status" value="1"/>
</dbReference>
<dbReference type="Pfam" id="PF00391">
    <property type="entry name" value="PEP-utilizers"/>
    <property type="match status" value="1"/>
</dbReference>
<dbReference type="Pfam" id="PF02896">
    <property type="entry name" value="PEP-utilizers_C"/>
    <property type="match status" value="1"/>
</dbReference>
<dbReference type="PIRSF" id="PIRSF000732">
    <property type="entry name" value="PTS_enzyme_I"/>
    <property type="match status" value="1"/>
</dbReference>
<dbReference type="PRINTS" id="PR01736">
    <property type="entry name" value="PHPHTRNFRASE"/>
</dbReference>
<dbReference type="SUPFAM" id="SSF47831">
    <property type="entry name" value="Enzyme I of the PEP:sugar phosphotransferase system HPr-binding (sub)domain"/>
    <property type="match status" value="1"/>
</dbReference>
<dbReference type="SUPFAM" id="SSF51621">
    <property type="entry name" value="Phosphoenolpyruvate/pyruvate domain"/>
    <property type="match status" value="1"/>
</dbReference>
<dbReference type="SUPFAM" id="SSF52009">
    <property type="entry name" value="Phosphohistidine domain"/>
    <property type="match status" value="1"/>
</dbReference>
<dbReference type="PROSITE" id="PS00742">
    <property type="entry name" value="PEP_ENZYMES_2"/>
    <property type="match status" value="1"/>
</dbReference>
<dbReference type="PROSITE" id="PS00370">
    <property type="entry name" value="PEP_ENZYMES_PHOS_SITE"/>
    <property type="match status" value="1"/>
</dbReference>
<organism>
    <name type="scientific">Staphylococcus aureus (strain COL)</name>
    <dbReference type="NCBI Taxonomy" id="93062"/>
    <lineage>
        <taxon>Bacteria</taxon>
        <taxon>Bacillati</taxon>
        <taxon>Bacillota</taxon>
        <taxon>Bacilli</taxon>
        <taxon>Bacillales</taxon>
        <taxon>Staphylococcaceae</taxon>
        <taxon>Staphylococcus</taxon>
    </lineage>
</organism>
<feature type="chain" id="PRO_0000147080" description="Phosphoenolpyruvate-protein phosphotransferase">
    <location>
        <begin position="1"/>
        <end position="572"/>
    </location>
</feature>
<feature type="active site" description="Tele-phosphohistidine intermediate" evidence="1">
    <location>
        <position position="191"/>
    </location>
</feature>
<feature type="active site" description="Proton donor" evidence="1">
    <location>
        <position position="504"/>
    </location>
</feature>
<feature type="binding site" evidence="2">
    <location>
        <position position="298"/>
    </location>
    <ligand>
        <name>phosphoenolpyruvate</name>
        <dbReference type="ChEBI" id="CHEBI:58702"/>
    </ligand>
</feature>
<feature type="binding site" evidence="1">
    <location>
        <position position="334"/>
    </location>
    <ligand>
        <name>phosphoenolpyruvate</name>
        <dbReference type="ChEBI" id="CHEBI:58702"/>
    </ligand>
</feature>
<feature type="binding site" evidence="1">
    <location>
        <position position="433"/>
    </location>
    <ligand>
        <name>Mg(2+)</name>
        <dbReference type="ChEBI" id="CHEBI:18420"/>
    </ligand>
</feature>
<feature type="binding site" evidence="1">
    <location>
        <begin position="456"/>
        <end position="457"/>
    </location>
    <ligand>
        <name>phosphoenolpyruvate</name>
        <dbReference type="ChEBI" id="CHEBI:58702"/>
    </ligand>
</feature>
<feature type="binding site" evidence="1">
    <location>
        <position position="457"/>
    </location>
    <ligand>
        <name>Mg(2+)</name>
        <dbReference type="ChEBI" id="CHEBI:18420"/>
    </ligand>
</feature>
<feature type="binding site" evidence="2">
    <location>
        <position position="467"/>
    </location>
    <ligand>
        <name>phosphoenolpyruvate</name>
        <dbReference type="ChEBI" id="CHEBI:58702"/>
    </ligand>
</feature>
<comment type="function">
    <text evidence="1">General (non sugar-specific) component of the phosphoenolpyruvate-dependent sugar phosphotransferase system (sugar PTS). This major carbohydrate active-transport system catalyzes the phosphorylation of incoming sugar substrates concomitantly with their translocation across the cell membrane. Enzyme I transfers the phosphoryl group from phosphoenolpyruvate (PEP) to the phosphoryl carrier protein (HPr).</text>
</comment>
<comment type="catalytic activity">
    <reaction evidence="1">
        <text>L-histidyl-[protein] + phosphoenolpyruvate = N(pros)-phospho-L-histidyl-[protein] + pyruvate</text>
        <dbReference type="Rhea" id="RHEA:23880"/>
        <dbReference type="Rhea" id="RHEA-COMP:9745"/>
        <dbReference type="Rhea" id="RHEA-COMP:9746"/>
        <dbReference type="ChEBI" id="CHEBI:15361"/>
        <dbReference type="ChEBI" id="CHEBI:29979"/>
        <dbReference type="ChEBI" id="CHEBI:58702"/>
        <dbReference type="ChEBI" id="CHEBI:64837"/>
        <dbReference type="EC" id="2.7.3.9"/>
    </reaction>
</comment>
<comment type="cofactor">
    <cofactor evidence="1">
        <name>Mg(2+)</name>
        <dbReference type="ChEBI" id="CHEBI:18420"/>
    </cofactor>
</comment>
<comment type="subunit">
    <text evidence="1">Homodimer.</text>
</comment>
<comment type="subcellular location">
    <subcellularLocation>
        <location evidence="3">Cytoplasm</location>
    </subcellularLocation>
</comment>
<comment type="domain">
    <text evidence="1">The N-terminal domain contains the HPr binding site, the central domain the pyrophosphate/phosphate carrier histidine, and the C-terminal domain the pyruvate binding site.</text>
</comment>
<comment type="miscellaneous">
    <text evidence="1">The reaction takes place in three steps, mediated by a phosphocarrier histidine residue located on the surface of the central domain. The two first partial reactions are catalyzed at an active site located on the N-terminal domain, and the third partial reaction is catalyzed at an active site located on the C-terminal domain. For catalytic turnover, the central domain swivels from the concave surface of the N-terminal domain to that of the C-terminal domain.</text>
</comment>
<comment type="similarity">
    <text evidence="3">Belongs to the PEP-utilizing enzyme family.</text>
</comment>
<protein>
    <recommendedName>
        <fullName evidence="1">Phosphoenolpyruvate-protein phosphotransferase</fullName>
        <ecNumber evidence="1">2.7.3.9</ecNumber>
    </recommendedName>
    <alternativeName>
        <fullName evidence="1">Phosphotransferase system, enzyme I</fullName>
    </alternativeName>
</protein>
<sequence>MSKLIKGIAASDGVAIAKAYLLVEPDLTFDKNEKVTDVEGEVAKFNSAIEASKVELTKIRNNAEVQLGADKAAIFDAHLLVLDDPELIQPIQDKIKNENANAATALTDVTTQFVTIFESMDNEYMKERAADIRDVSKRVLSHILGVELPNPSMIDESVVIVGNDLTPSDTAQLNKEFVQGFATNIGGRTSHSAIMSRSLEIPAIVGTKSITQEVKQGDMIIVDGLNGDVIVNPTEDELIAYQDKRERYFADKKELQKLRDADTVTVDGVHAELAANIGTPNDLPGVIENGAQGIGLYRTEFLYMGRDQMPTEEEQFEAYKEVLEAMGGKRVVVRTLDIGGDKELSYLNLPEEMNPFLGYRAIRLCLAQQDIFRPQLRALLRASVYGKLNIMFPMVATINEFREAKAILLEEKENLKNEGHDISDDIELGIMVEIPATAALADVFAKEVDFFSIGTNDLIQYTLAADRMSERVSYLYQPYNPSILRLVKQVIEASHKEGKWTGMCGEMAGDETAIPLLLGLGLDEFSMSATSILKARRQINGLSKNEMTELANRAVDCATQEEVIELVNNYVK</sequence>
<name>PT1_STAAC</name>
<reference key="1">
    <citation type="journal article" date="2005" name="J. Bacteriol.">
        <title>Insights on evolution of virulence and resistance from the complete genome analysis of an early methicillin-resistant Staphylococcus aureus strain and a biofilm-producing methicillin-resistant Staphylococcus epidermidis strain.</title>
        <authorList>
            <person name="Gill S.R."/>
            <person name="Fouts D.E."/>
            <person name="Archer G.L."/>
            <person name="Mongodin E.F."/>
            <person name="DeBoy R.T."/>
            <person name="Ravel J."/>
            <person name="Paulsen I.T."/>
            <person name="Kolonay J.F."/>
            <person name="Brinkac L.M."/>
            <person name="Beanan M.J."/>
            <person name="Dodson R.J."/>
            <person name="Daugherty S.C."/>
            <person name="Madupu R."/>
            <person name="Angiuoli S.V."/>
            <person name="Durkin A.S."/>
            <person name="Haft D.H."/>
            <person name="Vamathevan J.J."/>
            <person name="Khouri H."/>
            <person name="Utterback T.R."/>
            <person name="Lee C."/>
            <person name="Dimitrov G."/>
            <person name="Jiang L."/>
            <person name="Qin H."/>
            <person name="Weidman J."/>
            <person name="Tran K."/>
            <person name="Kang K.H."/>
            <person name="Hance I.R."/>
            <person name="Nelson K.E."/>
            <person name="Fraser C.M."/>
        </authorList>
    </citation>
    <scope>NUCLEOTIDE SEQUENCE [LARGE SCALE GENOMIC DNA]</scope>
    <source>
        <strain>COL</strain>
    </source>
</reference>